<accession>Q8BB22</accession>
<dbReference type="EMBL" id="AY078417">
    <property type="protein sequence ID" value="AAL80037.1"/>
    <property type="molecule type" value="Genomic_RNA"/>
</dbReference>
<dbReference type="Proteomes" id="UP000007546">
    <property type="component" value="Genome"/>
</dbReference>
<dbReference type="GO" id="GO:0044423">
    <property type="term" value="C:virion component"/>
    <property type="evidence" value="ECO:0007669"/>
    <property type="project" value="UniProtKB-KW"/>
</dbReference>
<dbReference type="CDD" id="cd21662">
    <property type="entry name" value="embe-CoV_Protein-I_like"/>
    <property type="match status" value="1"/>
</dbReference>
<dbReference type="InterPro" id="IPR004876">
    <property type="entry name" value="Corona_nucI"/>
</dbReference>
<dbReference type="InterPro" id="IPR044311">
    <property type="entry name" value="N2-like_embe-CoV"/>
</dbReference>
<dbReference type="Pfam" id="PF03187">
    <property type="entry name" value="Corona_I"/>
    <property type="match status" value="1"/>
</dbReference>
<protein>
    <recommendedName>
        <fullName>Protein I</fullName>
    </recommendedName>
    <alternativeName>
        <fullName>Accessory protein N2</fullName>
    </alternativeName>
    <alternativeName>
        <fullName>N internal ORF protein</fullName>
        <shortName>IORF</shortName>
    </alternativeName>
    <alternativeName>
        <fullName>Protein in nucleocapsid ORF</fullName>
    </alternativeName>
</protein>
<reference key="1">
    <citation type="journal article" date="2002" name="J. Gen. Virol.">
        <title>Sequence of the 3'-terminal end (8.1 kb) of the genome of porcine haemagglutinating encephalomyelitis virus: comparison with other haemagglutinating coronaviruses.</title>
        <authorList>
            <person name="Sasseville A.M.-J."/>
            <person name="Boutin M."/>
            <person name="Gelinas A.-M."/>
            <person name="Dea S."/>
        </authorList>
    </citation>
    <scope>NUCLEOTIDE SEQUENCE [GENOMIC RNA]</scope>
</reference>
<feature type="chain" id="PRO_0000284100" description="Protein I">
    <location>
        <begin position="1"/>
        <end position="207"/>
    </location>
</feature>
<gene>
    <name type="primary">N</name>
    <name type="synonym">I</name>
</gene>
<keyword id="KW-1185">Reference proteome</keyword>
<keyword id="KW-0946">Virion</keyword>
<name>IORF_CVP67</name>
<organismHost>
    <name type="scientific">Sus scrofa</name>
    <name type="common">Pig</name>
    <dbReference type="NCBI Taxonomy" id="9823"/>
</organismHost>
<evidence type="ECO:0000250" key="1"/>
<evidence type="ECO:0000305" key="2"/>
<organism>
    <name type="scientific">Porcine hemagglutinating encephalomyelitis virus (strain 67N)</name>
    <name type="common">HEV-67N</name>
    <dbReference type="NCBI Taxonomy" id="230237"/>
    <lineage>
        <taxon>Viruses</taxon>
        <taxon>Riboviria</taxon>
        <taxon>Orthornavirae</taxon>
        <taxon>Pisuviricota</taxon>
        <taxon>Pisoniviricetes</taxon>
        <taxon>Nidovirales</taxon>
        <taxon>Cornidovirineae</taxon>
        <taxon>Coronaviridae</taxon>
        <taxon>Orthocoronavirinae</taxon>
        <taxon>Betacoronavirus</taxon>
        <taxon>Embecovirus</taxon>
        <taxon>Betacoronavirus 1</taxon>
    </lineage>
</organism>
<sequence length="207" mass="23051">MASLSGPISPTSLEMFKPGVEEFNPSKLLLLSNHQEGLLYPTILGSLELLSFKRERSLNLQRDKVCLLHQESHLLKLRGTGTDTTDVLLKQPTAISVNCCHDGTFTTWEQDRMPKTSTAPTLTESSGSLVTRLILIPRLTLSIGIQVAMRLFRLGFRLARYSLKVTILKAQEGLLLIPDLLRVHPIEPLVQDRVVEPILAIEPLPLV</sequence>
<comment type="function">
    <text evidence="1">Structural protein that is not essential for the viral replication either in tissue culture or in its natural host.</text>
</comment>
<comment type="subcellular location">
    <subcellularLocation>
        <location evidence="1">Virion</location>
    </subcellularLocation>
</comment>
<comment type="miscellaneous">
    <text>The gene encoding this protein is included within the N gene (alternative ORF).</text>
</comment>
<comment type="similarity">
    <text evidence="2">Belongs to the coronavirus I protein family.</text>
</comment>
<proteinExistence type="inferred from homology"/>